<dbReference type="EC" id="3.1.-.-" evidence="1"/>
<dbReference type="EMBL" id="CP000709">
    <property type="protein sequence ID" value="ABQ62748.1"/>
    <property type="molecule type" value="Genomic_DNA"/>
</dbReference>
<dbReference type="SMR" id="A5VUS9"/>
<dbReference type="GeneID" id="45125947"/>
<dbReference type="KEGG" id="bov:BOV_A0563"/>
<dbReference type="HOGENOM" id="CLU_098240_1_1_5"/>
<dbReference type="PhylomeDB" id="A5VUS9"/>
<dbReference type="Proteomes" id="UP000006383">
    <property type="component" value="Chromosome II"/>
</dbReference>
<dbReference type="GO" id="GO:0005829">
    <property type="term" value="C:cytosol"/>
    <property type="evidence" value="ECO:0007669"/>
    <property type="project" value="TreeGrafter"/>
</dbReference>
<dbReference type="GO" id="GO:0004518">
    <property type="term" value="F:nuclease activity"/>
    <property type="evidence" value="ECO:0007669"/>
    <property type="project" value="UniProtKB-KW"/>
</dbReference>
<dbReference type="GO" id="GO:0000967">
    <property type="term" value="P:rRNA 5'-end processing"/>
    <property type="evidence" value="ECO:0007669"/>
    <property type="project" value="UniProtKB-UniRule"/>
</dbReference>
<dbReference type="CDD" id="cd16964">
    <property type="entry name" value="YqgF"/>
    <property type="match status" value="1"/>
</dbReference>
<dbReference type="Gene3D" id="3.30.420.140">
    <property type="entry name" value="YqgF/RNase H-like domain"/>
    <property type="match status" value="1"/>
</dbReference>
<dbReference type="HAMAP" id="MF_00651">
    <property type="entry name" value="Nuclease_YqgF"/>
    <property type="match status" value="1"/>
</dbReference>
<dbReference type="InterPro" id="IPR012337">
    <property type="entry name" value="RNaseH-like_sf"/>
</dbReference>
<dbReference type="InterPro" id="IPR005227">
    <property type="entry name" value="YqgF"/>
</dbReference>
<dbReference type="InterPro" id="IPR006641">
    <property type="entry name" value="YqgF/RNaseH-like_dom"/>
</dbReference>
<dbReference type="InterPro" id="IPR037027">
    <property type="entry name" value="YqgF/RNaseH-like_dom_sf"/>
</dbReference>
<dbReference type="NCBIfam" id="TIGR00250">
    <property type="entry name" value="RNAse_H_YqgF"/>
    <property type="match status" value="1"/>
</dbReference>
<dbReference type="PANTHER" id="PTHR33317">
    <property type="entry name" value="POLYNUCLEOTIDYL TRANSFERASE, RIBONUCLEASE H-LIKE SUPERFAMILY PROTEIN"/>
    <property type="match status" value="1"/>
</dbReference>
<dbReference type="PANTHER" id="PTHR33317:SF4">
    <property type="entry name" value="POLYNUCLEOTIDYL TRANSFERASE, RIBONUCLEASE H-LIKE SUPERFAMILY PROTEIN"/>
    <property type="match status" value="1"/>
</dbReference>
<dbReference type="Pfam" id="PF03652">
    <property type="entry name" value="RuvX"/>
    <property type="match status" value="1"/>
</dbReference>
<dbReference type="SMART" id="SM00732">
    <property type="entry name" value="YqgFc"/>
    <property type="match status" value="1"/>
</dbReference>
<dbReference type="SUPFAM" id="SSF53098">
    <property type="entry name" value="Ribonuclease H-like"/>
    <property type="match status" value="1"/>
</dbReference>
<organism>
    <name type="scientific">Brucella ovis (strain ATCC 25840 / 63/290 / NCTC 10512)</name>
    <dbReference type="NCBI Taxonomy" id="444178"/>
    <lineage>
        <taxon>Bacteria</taxon>
        <taxon>Pseudomonadati</taxon>
        <taxon>Pseudomonadota</taxon>
        <taxon>Alphaproteobacteria</taxon>
        <taxon>Hyphomicrobiales</taxon>
        <taxon>Brucellaceae</taxon>
        <taxon>Brucella/Ochrobactrum group</taxon>
        <taxon>Brucella</taxon>
    </lineage>
</organism>
<proteinExistence type="inferred from homology"/>
<sequence>MATAEIEEIPALLKPGQTVAGLDLGTKTIGLAVSDLGLSFAHPRPVIKRVKFTIDAQVLLKALETDKVGVIVIGLPMNMDGTAGPRVQATRAFVRTMQPLTDLPFVFWDERLSTVAVERALIGMDVSRGKRADRIDSAAAAFILQGALDRLHMMRRNDYDAG</sequence>
<gene>
    <name type="ordered locus">BOV_A0563</name>
</gene>
<protein>
    <recommendedName>
        <fullName evidence="1">Putative pre-16S rRNA nuclease</fullName>
        <ecNumber evidence="1">3.1.-.-</ecNumber>
    </recommendedName>
</protein>
<feature type="chain" id="PRO_1000061490" description="Putative pre-16S rRNA nuclease">
    <location>
        <begin position="1"/>
        <end position="162"/>
    </location>
</feature>
<evidence type="ECO:0000255" key="1">
    <source>
        <dbReference type="HAMAP-Rule" id="MF_00651"/>
    </source>
</evidence>
<comment type="function">
    <text evidence="1">Could be a nuclease involved in processing of the 5'-end of pre-16S rRNA.</text>
</comment>
<comment type="subcellular location">
    <subcellularLocation>
        <location evidence="1">Cytoplasm</location>
    </subcellularLocation>
</comment>
<comment type="similarity">
    <text evidence="1">Belongs to the YqgF nuclease family.</text>
</comment>
<keyword id="KW-0963">Cytoplasm</keyword>
<keyword id="KW-0378">Hydrolase</keyword>
<keyword id="KW-0540">Nuclease</keyword>
<keyword id="KW-0690">Ribosome biogenesis</keyword>
<reference key="1">
    <citation type="journal article" date="2009" name="PLoS ONE">
        <title>Genome degradation in Brucella ovis corresponds with narrowing of its host range and tissue tropism.</title>
        <authorList>
            <person name="Tsolis R.M."/>
            <person name="Seshadri R."/>
            <person name="Santos R.L."/>
            <person name="Sangari F.J."/>
            <person name="Lobo J.M."/>
            <person name="de Jong M.F."/>
            <person name="Ren Q."/>
            <person name="Myers G."/>
            <person name="Brinkac L.M."/>
            <person name="Nelson W.C."/>
            <person name="Deboy R.T."/>
            <person name="Angiuoli S."/>
            <person name="Khouri H."/>
            <person name="Dimitrov G."/>
            <person name="Robinson J.R."/>
            <person name="Mulligan S."/>
            <person name="Walker R.L."/>
            <person name="Elzer P.E."/>
            <person name="Hassan K.A."/>
            <person name="Paulsen I.T."/>
        </authorList>
    </citation>
    <scope>NUCLEOTIDE SEQUENCE [LARGE SCALE GENOMIC DNA]</scope>
    <source>
        <strain>ATCC 25840 / 63/290 / NCTC 10512</strain>
    </source>
</reference>
<accession>A5VUS9</accession>
<name>YQGF_BRUO2</name>